<organism>
    <name type="scientific">Escherichia coli O127:H6 (strain E2348/69 / EPEC)</name>
    <dbReference type="NCBI Taxonomy" id="574521"/>
    <lineage>
        <taxon>Bacteria</taxon>
        <taxon>Pseudomonadati</taxon>
        <taxon>Pseudomonadota</taxon>
        <taxon>Gammaproteobacteria</taxon>
        <taxon>Enterobacterales</taxon>
        <taxon>Enterobacteriaceae</taxon>
        <taxon>Escherichia</taxon>
    </lineage>
</organism>
<evidence type="ECO:0000255" key="1">
    <source>
        <dbReference type="HAMAP-Rule" id="MF_02012"/>
    </source>
</evidence>
<proteinExistence type="inferred from homology"/>
<reference key="1">
    <citation type="journal article" date="2009" name="J. Bacteriol.">
        <title>Complete genome sequence and comparative genome analysis of enteropathogenic Escherichia coli O127:H6 strain E2348/69.</title>
        <authorList>
            <person name="Iguchi A."/>
            <person name="Thomson N.R."/>
            <person name="Ogura Y."/>
            <person name="Saunders D."/>
            <person name="Ooka T."/>
            <person name="Henderson I.R."/>
            <person name="Harris D."/>
            <person name="Asadulghani M."/>
            <person name="Kurokawa K."/>
            <person name="Dean P."/>
            <person name="Kenny B."/>
            <person name="Quail M.A."/>
            <person name="Thurston S."/>
            <person name="Dougan G."/>
            <person name="Hayashi T."/>
            <person name="Parkhill J."/>
            <person name="Frankel G."/>
        </authorList>
    </citation>
    <scope>NUCLEOTIDE SEQUENCE [LARGE SCALE GENOMIC DNA]</scope>
    <source>
        <strain>E2348/69 / EPEC</strain>
    </source>
</reference>
<name>ZAPA_ECO27</name>
<feature type="chain" id="PRO_1000189506" description="Cell division protein ZapA">
    <location>
        <begin position="1"/>
        <end position="109"/>
    </location>
</feature>
<feature type="coiled-coil region" evidence="1">
    <location>
        <begin position="21"/>
        <end position="99"/>
    </location>
</feature>
<protein>
    <recommendedName>
        <fullName evidence="1">Cell division protein ZapA</fullName>
    </recommendedName>
    <alternativeName>
        <fullName evidence="1">Z ring-associated protein ZapA</fullName>
    </alternativeName>
</protein>
<comment type="function">
    <text evidence="1">Activator of cell division through the inhibition of FtsZ GTPase activity, therefore promoting FtsZ assembly into bundles of protofilaments necessary for the formation of the division Z ring. It is recruited early at mid-cell but it is not essential for cell division.</text>
</comment>
<comment type="subunit">
    <text evidence="1">Homodimer. Interacts with FtsZ.</text>
</comment>
<comment type="subcellular location">
    <subcellularLocation>
        <location evidence="1">Cytoplasm</location>
    </subcellularLocation>
    <text evidence="1">Localizes at mid-cell.</text>
</comment>
<comment type="similarity">
    <text evidence="1">Belongs to the ZapA family. Type 1 subfamily.</text>
</comment>
<sequence>MSAQPVDIQIFGRSLRVNCPPDQRDALNQAADDLNQRLQDLKERTRVTNTEQLVFIAALNISYELAQEKAKTRDYAASMEQRIRMLQQTIEQALLEQGRITEKTNQNFE</sequence>
<accession>B7UHV8</accession>
<gene>
    <name evidence="1" type="primary">zapA</name>
    <name type="ordered locus">E2348C_3162</name>
</gene>
<keyword id="KW-0131">Cell cycle</keyword>
<keyword id="KW-0132">Cell division</keyword>
<keyword id="KW-0175">Coiled coil</keyword>
<keyword id="KW-0963">Cytoplasm</keyword>
<keyword id="KW-1185">Reference proteome</keyword>
<keyword id="KW-0717">Septation</keyword>
<dbReference type="EMBL" id="FM180568">
    <property type="protein sequence ID" value="CAS10710.1"/>
    <property type="molecule type" value="Genomic_DNA"/>
</dbReference>
<dbReference type="RefSeq" id="WP_001276008.1">
    <property type="nucleotide sequence ID" value="NC_011601.1"/>
</dbReference>
<dbReference type="SMR" id="B7UHV8"/>
<dbReference type="GeneID" id="93779091"/>
<dbReference type="KEGG" id="ecg:E2348C_3162"/>
<dbReference type="HOGENOM" id="CLU_116623_3_0_6"/>
<dbReference type="Proteomes" id="UP000008205">
    <property type="component" value="Chromosome"/>
</dbReference>
<dbReference type="GO" id="GO:0032153">
    <property type="term" value="C:cell division site"/>
    <property type="evidence" value="ECO:0007669"/>
    <property type="project" value="TreeGrafter"/>
</dbReference>
<dbReference type="GO" id="GO:0030428">
    <property type="term" value="C:cell septum"/>
    <property type="evidence" value="ECO:0007669"/>
    <property type="project" value="TreeGrafter"/>
</dbReference>
<dbReference type="GO" id="GO:0005829">
    <property type="term" value="C:cytosol"/>
    <property type="evidence" value="ECO:0007669"/>
    <property type="project" value="TreeGrafter"/>
</dbReference>
<dbReference type="GO" id="GO:0005886">
    <property type="term" value="C:plasma membrane"/>
    <property type="evidence" value="ECO:0007669"/>
    <property type="project" value="UniProtKB-UniRule"/>
</dbReference>
<dbReference type="GO" id="GO:0000917">
    <property type="term" value="P:division septum assembly"/>
    <property type="evidence" value="ECO:0007669"/>
    <property type="project" value="UniProtKB-KW"/>
</dbReference>
<dbReference type="GO" id="GO:0043093">
    <property type="term" value="P:FtsZ-dependent cytokinesis"/>
    <property type="evidence" value="ECO:0007669"/>
    <property type="project" value="TreeGrafter"/>
</dbReference>
<dbReference type="GO" id="GO:0000921">
    <property type="term" value="P:septin ring assembly"/>
    <property type="evidence" value="ECO:0007669"/>
    <property type="project" value="TreeGrafter"/>
</dbReference>
<dbReference type="FunFam" id="1.20.5.50:FF:000001">
    <property type="entry name" value="Cell division protein ZapA"/>
    <property type="match status" value="1"/>
</dbReference>
<dbReference type="FunFam" id="3.30.160.880:FF:000001">
    <property type="entry name" value="Cell division protein ZapA"/>
    <property type="match status" value="1"/>
</dbReference>
<dbReference type="Gene3D" id="1.20.5.50">
    <property type="match status" value="1"/>
</dbReference>
<dbReference type="Gene3D" id="3.30.160.880">
    <property type="entry name" value="Cell division protein ZapA protomer, N-terminal domain"/>
    <property type="match status" value="1"/>
</dbReference>
<dbReference type="HAMAP" id="MF_02012">
    <property type="entry name" value="ZapA_type1"/>
    <property type="match status" value="1"/>
</dbReference>
<dbReference type="InterPro" id="IPR007838">
    <property type="entry name" value="Cell_div_ZapA-like"/>
</dbReference>
<dbReference type="InterPro" id="IPR036192">
    <property type="entry name" value="Cell_div_ZapA-like_sf"/>
</dbReference>
<dbReference type="InterPro" id="IPR023771">
    <property type="entry name" value="Cell_div_ZapA_eubact"/>
</dbReference>
<dbReference type="InterPro" id="IPR042233">
    <property type="entry name" value="Cell_div_ZapA_N"/>
</dbReference>
<dbReference type="NCBIfam" id="NF008209">
    <property type="entry name" value="PRK10972.1"/>
    <property type="match status" value="1"/>
</dbReference>
<dbReference type="PANTHER" id="PTHR34981">
    <property type="entry name" value="CELL DIVISION PROTEIN ZAPA"/>
    <property type="match status" value="1"/>
</dbReference>
<dbReference type="PANTHER" id="PTHR34981:SF1">
    <property type="entry name" value="CELL DIVISION PROTEIN ZAPA"/>
    <property type="match status" value="1"/>
</dbReference>
<dbReference type="Pfam" id="PF05164">
    <property type="entry name" value="ZapA"/>
    <property type="match status" value="1"/>
</dbReference>
<dbReference type="SUPFAM" id="SSF102829">
    <property type="entry name" value="Cell division protein ZapA-like"/>
    <property type="match status" value="1"/>
</dbReference>